<proteinExistence type="evidence at protein level"/>
<reference key="1">
    <citation type="journal article" date="1988" name="J. Cell Biol.">
        <title>A temperature-sensitive mutation of the Schizosaccharomyces pombe gene nuc2+ that encodes a nuclear scaffold-like protein blocks spindle elongation in mitotic anaphase.</title>
        <authorList>
            <person name="Hirano M."/>
            <person name="Hiraoka Y."/>
            <person name="Yanagida M."/>
        </authorList>
    </citation>
    <scope>NUCLEOTIDE SEQUENCE [GENOMIC DNA]</scope>
    <scope>MUTAGENESIS OF GLY-504</scope>
</reference>
<reference key="2">
    <citation type="submission" date="1989-03" db="EMBL/GenBank/DDBJ databases">
        <authorList>
            <person name="Yanagida M."/>
        </authorList>
    </citation>
    <scope>SEQUENCE REVISION TO 649</scope>
</reference>
<reference key="3">
    <citation type="journal article" date="2002" name="Nature">
        <title>The genome sequence of Schizosaccharomyces pombe.</title>
        <authorList>
            <person name="Wood V."/>
            <person name="Gwilliam R."/>
            <person name="Rajandream M.A."/>
            <person name="Lyne M.H."/>
            <person name="Lyne R."/>
            <person name="Stewart A."/>
            <person name="Sgouros J.G."/>
            <person name="Peat N."/>
            <person name="Hayles J."/>
            <person name="Baker S.G."/>
            <person name="Basham D."/>
            <person name="Bowman S."/>
            <person name="Brooks K."/>
            <person name="Brown D."/>
            <person name="Brown S."/>
            <person name="Chillingworth T."/>
            <person name="Churcher C.M."/>
            <person name="Collins M."/>
            <person name="Connor R."/>
            <person name="Cronin A."/>
            <person name="Davis P."/>
            <person name="Feltwell T."/>
            <person name="Fraser A."/>
            <person name="Gentles S."/>
            <person name="Goble A."/>
            <person name="Hamlin N."/>
            <person name="Harris D.E."/>
            <person name="Hidalgo J."/>
            <person name="Hodgson G."/>
            <person name="Holroyd S."/>
            <person name="Hornsby T."/>
            <person name="Howarth S."/>
            <person name="Huckle E.J."/>
            <person name="Hunt S."/>
            <person name="Jagels K."/>
            <person name="James K.D."/>
            <person name="Jones L."/>
            <person name="Jones M."/>
            <person name="Leather S."/>
            <person name="McDonald S."/>
            <person name="McLean J."/>
            <person name="Mooney P."/>
            <person name="Moule S."/>
            <person name="Mungall K.L."/>
            <person name="Murphy L.D."/>
            <person name="Niblett D."/>
            <person name="Odell C."/>
            <person name="Oliver K."/>
            <person name="O'Neil S."/>
            <person name="Pearson D."/>
            <person name="Quail M.A."/>
            <person name="Rabbinowitsch E."/>
            <person name="Rutherford K.M."/>
            <person name="Rutter S."/>
            <person name="Saunders D."/>
            <person name="Seeger K."/>
            <person name="Sharp S."/>
            <person name="Skelton J."/>
            <person name="Simmonds M.N."/>
            <person name="Squares R."/>
            <person name="Squares S."/>
            <person name="Stevens K."/>
            <person name="Taylor K."/>
            <person name="Taylor R.G."/>
            <person name="Tivey A."/>
            <person name="Walsh S.V."/>
            <person name="Warren T."/>
            <person name="Whitehead S."/>
            <person name="Woodward J.R."/>
            <person name="Volckaert G."/>
            <person name="Aert R."/>
            <person name="Robben J."/>
            <person name="Grymonprez B."/>
            <person name="Weltjens I."/>
            <person name="Vanstreels E."/>
            <person name="Rieger M."/>
            <person name="Schaefer M."/>
            <person name="Mueller-Auer S."/>
            <person name="Gabel C."/>
            <person name="Fuchs M."/>
            <person name="Duesterhoeft A."/>
            <person name="Fritzc C."/>
            <person name="Holzer E."/>
            <person name="Moestl D."/>
            <person name="Hilbert H."/>
            <person name="Borzym K."/>
            <person name="Langer I."/>
            <person name="Beck A."/>
            <person name="Lehrach H."/>
            <person name="Reinhardt R."/>
            <person name="Pohl T.M."/>
            <person name="Eger P."/>
            <person name="Zimmermann W."/>
            <person name="Wedler H."/>
            <person name="Wambutt R."/>
            <person name="Purnelle B."/>
            <person name="Goffeau A."/>
            <person name="Cadieu E."/>
            <person name="Dreano S."/>
            <person name="Gloux S."/>
            <person name="Lelaure V."/>
            <person name="Mottier S."/>
            <person name="Galibert F."/>
            <person name="Aves S.J."/>
            <person name="Xiang Z."/>
            <person name="Hunt C."/>
            <person name="Moore K."/>
            <person name="Hurst S.M."/>
            <person name="Lucas M."/>
            <person name="Rochet M."/>
            <person name="Gaillardin C."/>
            <person name="Tallada V.A."/>
            <person name="Garzon A."/>
            <person name="Thode G."/>
            <person name="Daga R.R."/>
            <person name="Cruzado L."/>
            <person name="Jimenez J."/>
            <person name="Sanchez M."/>
            <person name="del Rey F."/>
            <person name="Benito J."/>
            <person name="Dominguez A."/>
            <person name="Revuelta J.L."/>
            <person name="Moreno S."/>
            <person name="Armstrong J."/>
            <person name="Forsburg S.L."/>
            <person name="Cerutti L."/>
            <person name="Lowe T."/>
            <person name="McCombie W.R."/>
            <person name="Paulsen I."/>
            <person name="Potashkin J."/>
            <person name="Shpakovski G.V."/>
            <person name="Ussery D."/>
            <person name="Barrell B.G."/>
            <person name="Nurse P."/>
        </authorList>
    </citation>
    <scope>NUCLEOTIDE SEQUENCE [LARGE SCALE GENOMIC DNA]</scope>
    <source>
        <strain>972 / ATCC 24843</strain>
    </source>
</reference>
<reference key="4">
    <citation type="journal article" date="1990" name="Cell">
        <title>Snap helix with knob and hole: essential repeats in S. pombe nuclear protein nuc2+.</title>
        <authorList>
            <person name="Hirano T."/>
            <person name="Kinoshita N."/>
            <person name="Morikawa K."/>
            <person name="Yanagida M."/>
        </authorList>
    </citation>
    <scope>DOMAINS</scope>
</reference>
<reference key="5">
    <citation type="journal article" date="1997" name="J. Cell Sci.">
        <title>Distinct subunit functions and cell cycle regulated phosphorylation of 20S APC/cyclosome required for anaphase in fission yeast.</title>
        <authorList>
            <person name="Yamada H."/>
            <person name="Kumada K."/>
            <person name="Yanagida M."/>
        </authorList>
    </citation>
    <scope>FUNCTION</scope>
    <scope>INTERACTION WITH CUT9</scope>
</reference>
<reference key="6">
    <citation type="journal article" date="1998" name="EMBO J.">
        <title>Apc10 and Ste9/Srw1, two regulators of the APC-cyclosome, as well as the CDK inhibitor Rum1 are required for G1 cell-cycle arrest in fission yeast.</title>
        <authorList>
            <person name="Kominami K."/>
            <person name="Seth-Smith H."/>
            <person name="Toda T."/>
        </authorList>
    </citation>
    <scope>INTERACTION WITH APC10</scope>
</reference>
<reference key="7">
    <citation type="journal article" date="2002" name="Curr. Biol.">
        <title>Proteomics analysis identifies new components of the fission and budding yeast anaphase-promoting complexes.</title>
        <authorList>
            <person name="Yoon H.-J."/>
            <person name="Feoktistova A."/>
            <person name="Wolfe B.A."/>
            <person name="Jennings J.L."/>
            <person name="Link A.J."/>
            <person name="Gould K.L."/>
        </authorList>
    </citation>
    <scope>SUBUNIT</scope>
</reference>
<name>APC3_SCHPO</name>
<comment type="function">
    <text evidence="3">Component of the anaphase-promoting complex/cyclosome (APC/C), a cell cycle-regulated E3 ubiquitin-protein ligase complex that controls progression through mitosis and the G1 phase of the cell cycle. The APC/C is thought to confer substrate specificity and, in the presence of ubiquitin-conjugating E2 enzymes, it catalyzes the formation of protein-ubiquitin conjugates that are subsequently degraded by the 26S proteasome. Interacts with spindle apparatus, chromosomes, or nuclear envelope, and interconnect nuclear and cytoskeletal functions in mitosis, so the elongation of the spindle in anaphase is blocked.</text>
</comment>
<comment type="subunit">
    <text evidence="1 3 4">The APC/C is composed of at least 13 subunits: apc1, apc2, nuc2, apc4, apc5, cut9, apc8, apc10, apc11, hcn1, apc13, apc14 and apc15. Interacts with apc10 and cut9.</text>
</comment>
<comment type="subcellular location">
    <subcellularLocation>
        <location>Nucleus</location>
    </subcellularLocation>
</comment>
<comment type="similarity">
    <text evidence="5">Belongs to the APC3/CDC27 family.</text>
</comment>
<protein>
    <recommendedName>
        <fullName>Anaphase-promoting complex subunit 3</fullName>
    </recommendedName>
    <alternativeName>
        <fullName>20S cyclosome/APC complex protein apc3</fullName>
    </alternativeName>
    <alternativeName>
        <fullName>Nuclear alteration protein 2</fullName>
    </alternativeName>
    <alternativeName>
        <fullName>Nuclear scaffold-like protein p76</fullName>
    </alternativeName>
</protein>
<accession>P10505</accession>
<accession>Q9US21</accession>
<organism>
    <name type="scientific">Schizosaccharomyces pombe (strain 972 / ATCC 24843)</name>
    <name type="common">Fission yeast</name>
    <dbReference type="NCBI Taxonomy" id="284812"/>
    <lineage>
        <taxon>Eukaryota</taxon>
        <taxon>Fungi</taxon>
        <taxon>Dikarya</taxon>
        <taxon>Ascomycota</taxon>
        <taxon>Taphrinomycotina</taxon>
        <taxon>Schizosaccharomycetes</taxon>
        <taxon>Schizosaccharomycetales</taxon>
        <taxon>Schizosaccharomycetaceae</taxon>
        <taxon>Schizosaccharomyces</taxon>
    </lineage>
</organism>
<sequence>MTDRLKCLIWYCIDNQNYDNSIFYSERLHAIEDSNESLYLLAYSHFLNLDYNIVYDLLDRVISHVPCTYLFARTSLILGRYKQGISAVEACRSNWRSIQPNINDSISSRGHPDASCMLDVLGTMYKKAGFLKKATDCFVEAVSINPYNFSAFQNLTAIGVPLDANNVFVIPPYLTAMKGFEKSQTNATASVPEPSFLKKSKESSSSSNKFSVSESIANSYSNSSISAFTKWFDRVDASELPGSEKERHQSLKLQSQSQTSKNLLAFNDAQKADSNNRDTSLKSHFVEPRTQALRPGARLTYKLREARSSKRGESTPQSFREEDNNLMELLKLFGKGVYLLAQYKLREALNCFQSLPIEQQNTPFVLAKLGITYFELVDYEKSEEVFQKLRDLSPSRVKDMEVFSTALWHLQKSVPLSYLAHETLETNPYSPESWCILANCFSLQREHSQALKCINRAIQLDPTFEYAYTLQGHEHSANEEYEKSKTSFRKAIRVNVRHYNAWYGLGMVYLKTGRNDQADFHFQRAAEINPNNSVLITCIGMIYERCKDYKKALDFYDRACKLDEKSSLARFKKAKVLILLHDHDKALVELEQLKAIAPDEANVHFLLGKIFKQMRKKNLALKHFTIAWNLDGKATHIIKESIENLDIPEENLLTETGEIYRNLET</sequence>
<feature type="chain" id="PRO_0000106304" description="Anaphase-promoting complex subunit 3">
    <location>
        <begin position="1"/>
        <end position="665"/>
    </location>
</feature>
<feature type="repeat" description="TPR 1">
    <location>
        <begin position="115"/>
        <end position="148"/>
    </location>
</feature>
<feature type="repeat" description="TPR 2">
    <location>
        <begin position="329"/>
        <end position="362"/>
    </location>
</feature>
<feature type="repeat" description="TPR 3">
    <location>
        <begin position="363"/>
        <end position="396"/>
    </location>
</feature>
<feature type="repeat" description="TPR 4">
    <location>
        <begin position="431"/>
        <end position="464"/>
    </location>
</feature>
<feature type="repeat" description="TPR 5">
    <location>
        <begin position="466"/>
        <end position="498"/>
    </location>
</feature>
<feature type="repeat" description="TPR 6">
    <location>
        <begin position="499"/>
        <end position="532"/>
    </location>
</feature>
<feature type="repeat" description="TPR 7">
    <location>
        <begin position="534"/>
        <end position="566"/>
    </location>
</feature>
<feature type="repeat" description="TPR 8">
    <location>
        <begin position="568"/>
        <end position="600"/>
    </location>
</feature>
<feature type="repeat" description="TPR 9">
    <location>
        <begin position="601"/>
        <end position="634"/>
    </location>
</feature>
<feature type="DNA-binding region">
    <location>
        <begin position="191"/>
        <end position="257"/>
    </location>
</feature>
<feature type="mutagenesis site" description="In nuc2-663; temperature-sensitive." evidence="2">
    <original>G</original>
    <variation>D</variation>
    <location>
        <position position="504"/>
    </location>
</feature>
<feature type="sequence conflict" description="In Ref. 1; CAA30532." evidence="5" ref="1">
    <original>C</original>
    <variation>W</variation>
    <location>
        <position position="440"/>
    </location>
</feature>
<evidence type="ECO:0000269" key="1">
    <source>
    </source>
</evidence>
<evidence type="ECO:0000269" key="2">
    <source>
    </source>
</evidence>
<evidence type="ECO:0000269" key="3">
    <source>
    </source>
</evidence>
<evidence type="ECO:0000269" key="4">
    <source>
    </source>
</evidence>
<evidence type="ECO:0000305" key="5"/>
<dbReference type="EMBL" id="X07693">
    <property type="protein sequence ID" value="CAA30532.1"/>
    <property type="molecule type" value="Genomic_DNA"/>
</dbReference>
<dbReference type="EMBL" id="CU329670">
    <property type="protein sequence ID" value="CAA97347.2"/>
    <property type="molecule type" value="Genomic_DNA"/>
</dbReference>
<dbReference type="PIR" id="A30185">
    <property type="entry name" value="A30185"/>
</dbReference>
<dbReference type="PIR" id="T50124">
    <property type="entry name" value="T50124"/>
</dbReference>
<dbReference type="RefSeq" id="NP_594604.2">
    <property type="nucleotide sequence ID" value="NM_001020032.2"/>
</dbReference>
<dbReference type="SMR" id="P10505"/>
<dbReference type="BioGRID" id="278900">
    <property type="interactions" value="19"/>
</dbReference>
<dbReference type="ComplexPortal" id="CPX-763">
    <property type="entry name" value="Anaphase-promoting complex"/>
</dbReference>
<dbReference type="ComplexPortal" id="CPX-764">
    <property type="entry name" value="Anaphase-promoting complex, slp1 variant"/>
</dbReference>
<dbReference type="ComplexPortal" id="CPX-765">
    <property type="entry name" value="Anaphase-promoting complex, srw1 variant"/>
</dbReference>
<dbReference type="ComplexPortal" id="CPX-766">
    <property type="entry name" value="Anaphase-promoting complex, mfr1 variant"/>
</dbReference>
<dbReference type="FunCoup" id="P10505">
    <property type="interactions" value="925"/>
</dbReference>
<dbReference type="IntAct" id="P10505">
    <property type="interactions" value="2"/>
</dbReference>
<dbReference type="STRING" id="284812.P10505"/>
<dbReference type="iPTMnet" id="P10505"/>
<dbReference type="PaxDb" id="4896-SPAC17C9.01c.1"/>
<dbReference type="EnsemblFungi" id="SPAC17C9.01c.1">
    <property type="protein sequence ID" value="SPAC17C9.01c.1:pep"/>
    <property type="gene ID" value="SPAC17C9.01c"/>
</dbReference>
<dbReference type="GeneID" id="2542438"/>
<dbReference type="KEGG" id="spo:2542438"/>
<dbReference type="PomBase" id="SPAC17C9.01c">
    <property type="gene designation" value="nuc2"/>
</dbReference>
<dbReference type="VEuPathDB" id="FungiDB:SPAC17C9.01c"/>
<dbReference type="eggNOG" id="KOG1126">
    <property type="taxonomic scope" value="Eukaryota"/>
</dbReference>
<dbReference type="HOGENOM" id="CLU_008850_0_1_1"/>
<dbReference type="InParanoid" id="P10505"/>
<dbReference type="OMA" id="CKYDCYK"/>
<dbReference type="PhylomeDB" id="P10505"/>
<dbReference type="Reactome" id="R-SPO-983168">
    <property type="pathway name" value="Antigen processing: Ubiquitination &amp; Proteasome degradation"/>
</dbReference>
<dbReference type="PRO" id="PR:P10505"/>
<dbReference type="Proteomes" id="UP000002485">
    <property type="component" value="Chromosome I"/>
</dbReference>
<dbReference type="GO" id="GO:0005680">
    <property type="term" value="C:anaphase-promoting complex"/>
    <property type="evidence" value="ECO:0000314"/>
    <property type="project" value="PomBase"/>
</dbReference>
<dbReference type="GO" id="GO:0032153">
    <property type="term" value="C:cell division site"/>
    <property type="evidence" value="ECO:0007005"/>
    <property type="project" value="PomBase"/>
</dbReference>
<dbReference type="GO" id="GO:0005737">
    <property type="term" value="C:cytoplasm"/>
    <property type="evidence" value="ECO:0000318"/>
    <property type="project" value="GO_Central"/>
</dbReference>
<dbReference type="GO" id="GO:0005634">
    <property type="term" value="C:nucleus"/>
    <property type="evidence" value="ECO:0000314"/>
    <property type="project" value="PomBase"/>
</dbReference>
<dbReference type="GO" id="GO:0003677">
    <property type="term" value="F:DNA binding"/>
    <property type="evidence" value="ECO:0000314"/>
    <property type="project" value="PomBase"/>
</dbReference>
<dbReference type="GO" id="GO:0031145">
    <property type="term" value="P:anaphase-promoting complex-dependent catabolic process"/>
    <property type="evidence" value="ECO:0000318"/>
    <property type="project" value="GO_Central"/>
</dbReference>
<dbReference type="GO" id="GO:0051728">
    <property type="term" value="P:cell cycle switching, mitotic to meiotic cell cycle"/>
    <property type="evidence" value="ECO:0000315"/>
    <property type="project" value="PomBase"/>
</dbReference>
<dbReference type="GO" id="GO:0051301">
    <property type="term" value="P:cell division"/>
    <property type="evidence" value="ECO:0000318"/>
    <property type="project" value="GO_Central"/>
</dbReference>
<dbReference type="GO" id="GO:0007091">
    <property type="term" value="P:metaphase/anaphase transition of mitotic cell cycle"/>
    <property type="evidence" value="ECO:0000318"/>
    <property type="project" value="GO_Central"/>
</dbReference>
<dbReference type="GO" id="GO:0000070">
    <property type="term" value="P:mitotic sister chromatid segregation"/>
    <property type="evidence" value="ECO:0000315"/>
    <property type="project" value="PomBase"/>
</dbReference>
<dbReference type="GO" id="GO:0051306">
    <property type="term" value="P:mitotic sister chromatid separation"/>
    <property type="evidence" value="ECO:0000305"/>
    <property type="project" value="PomBase"/>
</dbReference>
<dbReference type="GO" id="GO:0016567">
    <property type="term" value="P:protein ubiquitination"/>
    <property type="evidence" value="ECO:0000318"/>
    <property type="project" value="GO_Central"/>
</dbReference>
<dbReference type="FunFam" id="1.25.40.10:FF:000018">
    <property type="entry name" value="Cell division cycle protein 27 homolog B"/>
    <property type="match status" value="1"/>
</dbReference>
<dbReference type="Gene3D" id="1.25.40.10">
    <property type="entry name" value="Tetratricopeptide repeat domain"/>
    <property type="match status" value="4"/>
</dbReference>
<dbReference type="InterPro" id="IPR011990">
    <property type="entry name" value="TPR-like_helical_dom_sf"/>
</dbReference>
<dbReference type="InterPro" id="IPR019734">
    <property type="entry name" value="TPR_rpt"/>
</dbReference>
<dbReference type="PANTHER" id="PTHR12558">
    <property type="entry name" value="CELL DIVISION CYCLE 16,23,27"/>
    <property type="match status" value="1"/>
</dbReference>
<dbReference type="PANTHER" id="PTHR12558:SF13">
    <property type="entry name" value="CELL DIVISION CYCLE PROTEIN 27 HOMOLOG"/>
    <property type="match status" value="1"/>
</dbReference>
<dbReference type="Pfam" id="PF12895">
    <property type="entry name" value="ANAPC3"/>
    <property type="match status" value="1"/>
</dbReference>
<dbReference type="Pfam" id="PF00515">
    <property type="entry name" value="TPR_1"/>
    <property type="match status" value="2"/>
</dbReference>
<dbReference type="Pfam" id="PF14559">
    <property type="entry name" value="TPR_19"/>
    <property type="match status" value="1"/>
</dbReference>
<dbReference type="Pfam" id="PF13181">
    <property type="entry name" value="TPR_8"/>
    <property type="match status" value="1"/>
</dbReference>
<dbReference type="SMART" id="SM00028">
    <property type="entry name" value="TPR"/>
    <property type="match status" value="8"/>
</dbReference>
<dbReference type="SUPFAM" id="SSF81901">
    <property type="entry name" value="HCP-like"/>
    <property type="match status" value="1"/>
</dbReference>
<dbReference type="SUPFAM" id="SSF48452">
    <property type="entry name" value="TPR-like"/>
    <property type="match status" value="2"/>
</dbReference>
<dbReference type="PROSITE" id="PS50005">
    <property type="entry name" value="TPR"/>
    <property type="match status" value="8"/>
</dbReference>
<dbReference type="PROSITE" id="PS50293">
    <property type="entry name" value="TPR_REGION"/>
    <property type="match status" value="2"/>
</dbReference>
<keyword id="KW-0131">Cell cycle</keyword>
<keyword id="KW-0132">Cell division</keyword>
<keyword id="KW-0498">Mitosis</keyword>
<keyword id="KW-0539">Nucleus</keyword>
<keyword id="KW-1185">Reference proteome</keyword>
<keyword id="KW-0677">Repeat</keyword>
<keyword id="KW-0802">TPR repeat</keyword>
<keyword id="KW-0833">Ubl conjugation pathway</keyword>
<gene>
    <name type="primary">nuc2</name>
    <name type="synonym">apc3</name>
    <name type="ORF">SPAC17C9.01c</name>
    <name type="ORF">SPAC1851.01</name>
</gene>